<accession>Q2YRA5</accession>
<comment type="function">
    <text evidence="1">Binds to 23S rRNA. Forms part of two intersubunit bridges in the 70S ribosome.</text>
</comment>
<comment type="subunit">
    <text evidence="1">Part of the 50S ribosomal subunit. Forms a cluster with proteins L3 and L19. In the 70S ribosome, L14 and L19 interact and together make contacts with the 16S rRNA in bridges B5 and B8.</text>
</comment>
<comment type="similarity">
    <text evidence="1">Belongs to the universal ribosomal protein uL14 family.</text>
</comment>
<keyword id="KW-1185">Reference proteome</keyword>
<keyword id="KW-0687">Ribonucleoprotein</keyword>
<keyword id="KW-0689">Ribosomal protein</keyword>
<keyword id="KW-0694">RNA-binding</keyword>
<keyword id="KW-0699">rRNA-binding</keyword>
<proteinExistence type="inferred from homology"/>
<dbReference type="EMBL" id="AM040264">
    <property type="protein sequence ID" value="CAJ11201.1"/>
    <property type="molecule type" value="Genomic_DNA"/>
</dbReference>
<dbReference type="RefSeq" id="WP_002964352.1">
    <property type="nucleotide sequence ID" value="NZ_KN046823.1"/>
</dbReference>
<dbReference type="SMR" id="Q2YRA5"/>
<dbReference type="STRING" id="359391.BAB1_1245"/>
<dbReference type="GeneID" id="93016449"/>
<dbReference type="KEGG" id="bmf:BAB1_1245"/>
<dbReference type="PATRIC" id="fig|359391.11.peg.145"/>
<dbReference type="HOGENOM" id="CLU_095071_2_1_5"/>
<dbReference type="PhylomeDB" id="Q2YRA5"/>
<dbReference type="Proteomes" id="UP000002719">
    <property type="component" value="Chromosome I"/>
</dbReference>
<dbReference type="GO" id="GO:0022625">
    <property type="term" value="C:cytosolic large ribosomal subunit"/>
    <property type="evidence" value="ECO:0007669"/>
    <property type="project" value="TreeGrafter"/>
</dbReference>
<dbReference type="GO" id="GO:0070180">
    <property type="term" value="F:large ribosomal subunit rRNA binding"/>
    <property type="evidence" value="ECO:0007669"/>
    <property type="project" value="TreeGrafter"/>
</dbReference>
<dbReference type="GO" id="GO:0003735">
    <property type="term" value="F:structural constituent of ribosome"/>
    <property type="evidence" value="ECO:0007669"/>
    <property type="project" value="InterPro"/>
</dbReference>
<dbReference type="GO" id="GO:0006412">
    <property type="term" value="P:translation"/>
    <property type="evidence" value="ECO:0007669"/>
    <property type="project" value="UniProtKB-UniRule"/>
</dbReference>
<dbReference type="CDD" id="cd00337">
    <property type="entry name" value="Ribosomal_uL14"/>
    <property type="match status" value="1"/>
</dbReference>
<dbReference type="FunFam" id="2.40.150.20:FF:000001">
    <property type="entry name" value="50S ribosomal protein L14"/>
    <property type="match status" value="1"/>
</dbReference>
<dbReference type="Gene3D" id="2.40.150.20">
    <property type="entry name" value="Ribosomal protein L14"/>
    <property type="match status" value="1"/>
</dbReference>
<dbReference type="HAMAP" id="MF_01367">
    <property type="entry name" value="Ribosomal_uL14"/>
    <property type="match status" value="1"/>
</dbReference>
<dbReference type="InterPro" id="IPR000218">
    <property type="entry name" value="Ribosomal_uL14"/>
</dbReference>
<dbReference type="InterPro" id="IPR005745">
    <property type="entry name" value="Ribosomal_uL14_bac-type"/>
</dbReference>
<dbReference type="InterPro" id="IPR019972">
    <property type="entry name" value="Ribosomal_uL14_CS"/>
</dbReference>
<dbReference type="InterPro" id="IPR036853">
    <property type="entry name" value="Ribosomal_uL14_sf"/>
</dbReference>
<dbReference type="NCBIfam" id="TIGR01067">
    <property type="entry name" value="rplN_bact"/>
    <property type="match status" value="1"/>
</dbReference>
<dbReference type="PANTHER" id="PTHR11761">
    <property type="entry name" value="50S/60S RIBOSOMAL PROTEIN L14/L23"/>
    <property type="match status" value="1"/>
</dbReference>
<dbReference type="PANTHER" id="PTHR11761:SF3">
    <property type="entry name" value="LARGE RIBOSOMAL SUBUNIT PROTEIN UL14M"/>
    <property type="match status" value="1"/>
</dbReference>
<dbReference type="Pfam" id="PF00238">
    <property type="entry name" value="Ribosomal_L14"/>
    <property type="match status" value="1"/>
</dbReference>
<dbReference type="SMART" id="SM01374">
    <property type="entry name" value="Ribosomal_L14"/>
    <property type="match status" value="1"/>
</dbReference>
<dbReference type="SUPFAM" id="SSF50193">
    <property type="entry name" value="Ribosomal protein L14"/>
    <property type="match status" value="1"/>
</dbReference>
<dbReference type="PROSITE" id="PS00049">
    <property type="entry name" value="RIBOSOMAL_L14"/>
    <property type="match status" value="1"/>
</dbReference>
<protein>
    <recommendedName>
        <fullName evidence="1">Large ribosomal subunit protein uL14</fullName>
    </recommendedName>
    <alternativeName>
        <fullName evidence="2">50S ribosomal protein L14</fullName>
    </alternativeName>
</protein>
<gene>
    <name evidence="1" type="primary">rplN</name>
    <name type="ordered locus">BAB1_1245</name>
</gene>
<evidence type="ECO:0000255" key="1">
    <source>
        <dbReference type="HAMAP-Rule" id="MF_01367"/>
    </source>
</evidence>
<evidence type="ECO:0000305" key="2"/>
<sequence length="122" mass="13474">MIQMQTNLDVADNSGARRVMCIKVLGGSKRRYASVGDIIVVSIKEAIPRGRVKKGEVMKAVVVRTAKDIRRPDGSVIRFDNNAAVLIDNKKEPIGTRIFGPVPRELRAKNHMKIISLAPEVL</sequence>
<feature type="chain" id="PRO_0000266457" description="Large ribosomal subunit protein uL14">
    <location>
        <begin position="1"/>
        <end position="122"/>
    </location>
</feature>
<reference key="1">
    <citation type="journal article" date="2005" name="Infect. Immun.">
        <title>Whole-genome analyses of speciation events in pathogenic Brucellae.</title>
        <authorList>
            <person name="Chain P.S."/>
            <person name="Comerci D.J."/>
            <person name="Tolmasky M.E."/>
            <person name="Larimer F.W."/>
            <person name="Malfatti S.A."/>
            <person name="Vergez L.M."/>
            <person name="Aguero F."/>
            <person name="Land M.L."/>
            <person name="Ugalde R.A."/>
            <person name="Garcia E."/>
        </authorList>
    </citation>
    <scope>NUCLEOTIDE SEQUENCE [LARGE SCALE GENOMIC DNA]</scope>
    <source>
        <strain>2308</strain>
    </source>
</reference>
<organism>
    <name type="scientific">Brucella abortus (strain 2308)</name>
    <dbReference type="NCBI Taxonomy" id="359391"/>
    <lineage>
        <taxon>Bacteria</taxon>
        <taxon>Pseudomonadati</taxon>
        <taxon>Pseudomonadota</taxon>
        <taxon>Alphaproteobacteria</taxon>
        <taxon>Hyphomicrobiales</taxon>
        <taxon>Brucellaceae</taxon>
        <taxon>Brucella/Ochrobactrum group</taxon>
        <taxon>Brucella</taxon>
    </lineage>
</organism>
<name>RL14_BRUA2</name>